<name>GLD2_RAT</name>
<organism>
    <name type="scientific">Rattus norvegicus</name>
    <name type="common">Rat</name>
    <dbReference type="NCBI Taxonomy" id="10116"/>
    <lineage>
        <taxon>Eukaryota</taxon>
        <taxon>Metazoa</taxon>
        <taxon>Chordata</taxon>
        <taxon>Craniata</taxon>
        <taxon>Vertebrata</taxon>
        <taxon>Euteleostomi</taxon>
        <taxon>Mammalia</taxon>
        <taxon>Eutheria</taxon>
        <taxon>Euarchontoglires</taxon>
        <taxon>Glires</taxon>
        <taxon>Rodentia</taxon>
        <taxon>Myomorpha</taxon>
        <taxon>Muroidea</taxon>
        <taxon>Muridae</taxon>
        <taxon>Murinae</taxon>
        <taxon>Rattus</taxon>
    </lineage>
</organism>
<sequence>MFPNSILGRPPFTPTHQQHNNFFALSPTLYSHQQLIDAQFNFQNVDLSRAVSLQPLTYGTVSPIQTSTSPLFRGRKRISDEKAFRLDGKRQRFHSPHQEPTIINQLVPLSGDRRYSMPPLFHTHYVPEIVRCVPPLREIPLLEPREITLPEAKDKLSQQILELFETCQQQASDLKKKELCRAQLQREIQLLFPQSRLFLVGSSLNGFGARSSDGDLCLVVKEEPCFFQVNQKTEARHILTLVHKHFCTRLSGYIERPQLIRAKVPIVKFRDKVSCVEFDLNVNNTVGIRNTFLLRTYAYLENRVRPLVLVIKKWASHHEINDASRGTLSSYSLVLMVLHYLQTLPEPILPSLQKIYPESFSTSVQLHLVHHAPCNVPPYLSKNESSLGDLLLGFLKYYATEFDWNTQMISVREAKAIPRPDDMEWRNKYICVEEPFDGTNTARAVHEKQKFDMIKDQFLKSWQRLKNKRDLNSVLPLRAATLKR</sequence>
<accession>Q5U315</accession>
<protein>
    <recommendedName>
        <fullName evidence="5">Poly(A) RNA polymerase GLD2</fullName>
        <ecNumber>2.7.7.19</ecNumber>
    </recommendedName>
    <alternativeName>
        <fullName evidence="5">PAP-associated domain-containing protein 4</fullName>
    </alternativeName>
    <alternativeName>
        <fullName evidence="6">Terminal nucleotidyltransferase 2</fullName>
    </alternativeName>
</protein>
<reference key="1">
    <citation type="journal article" date="2004" name="Genome Res.">
        <title>The status, quality, and expansion of the NIH full-length cDNA project: the Mammalian Gene Collection (MGC).</title>
        <authorList>
            <consortium name="The MGC Project Team"/>
        </authorList>
    </citation>
    <scope>NUCLEOTIDE SEQUENCE [LARGE SCALE MRNA]</scope>
    <source>
        <tissue>Heart</tissue>
    </source>
</reference>
<feature type="chain" id="PRO_0000341551" description="Poly(A) RNA polymerase GLD2">
    <location>
        <begin position="1"/>
        <end position="484"/>
    </location>
</feature>
<feature type="domain" description="PAP-associated">
    <location>
        <begin position="386"/>
        <end position="440"/>
    </location>
</feature>
<feature type="short sequence motif" description="Nuclear localization signal" evidence="4">
    <location>
        <begin position="76"/>
        <end position="92"/>
    </location>
</feature>
<feature type="binding site" evidence="1">
    <location>
        <position position="213"/>
    </location>
    <ligand>
        <name>Mg(2+)</name>
        <dbReference type="ChEBI" id="CHEBI:18420"/>
        <note>catalytic</note>
    </ligand>
</feature>
<feature type="binding site" evidence="1">
    <location>
        <position position="215"/>
    </location>
    <ligand>
        <name>Mg(2+)</name>
        <dbReference type="ChEBI" id="CHEBI:18420"/>
        <note>catalytic</note>
    </ligand>
</feature>
<feature type="modified residue" description="Phosphoserine" evidence="2">
    <location>
        <position position="62"/>
    </location>
</feature>
<feature type="modified residue" description="Phosphoserine" evidence="2">
    <location>
        <position position="69"/>
    </location>
</feature>
<feature type="modified residue" description="Phosphoserine" evidence="2">
    <location>
        <position position="95"/>
    </location>
</feature>
<feature type="helix" evidence="7">
    <location>
        <begin position="155"/>
        <end position="167"/>
    </location>
</feature>
<feature type="helix" evidence="7">
    <location>
        <begin position="171"/>
        <end position="189"/>
    </location>
</feature>
<feature type="strand" evidence="7">
    <location>
        <begin position="195"/>
        <end position="200"/>
    </location>
</feature>
<feature type="helix" evidence="7">
    <location>
        <begin position="201"/>
        <end position="203"/>
    </location>
</feature>
<feature type="strand" evidence="7">
    <location>
        <begin position="214"/>
        <end position="220"/>
    </location>
</feature>
<feature type="helix" evidence="7">
    <location>
        <begin position="232"/>
        <end position="248"/>
    </location>
</feature>
<feature type="turn" evidence="7">
    <location>
        <begin position="251"/>
        <end position="253"/>
    </location>
</feature>
<feature type="strand" evidence="7">
    <location>
        <begin position="254"/>
        <end position="260"/>
    </location>
</feature>
<feature type="strand" evidence="7">
    <location>
        <begin position="262"/>
        <end position="264"/>
    </location>
</feature>
<feature type="strand" evidence="7">
    <location>
        <begin position="266"/>
        <end position="271"/>
    </location>
</feature>
<feature type="turn" evidence="7">
    <location>
        <begin position="272"/>
        <end position="275"/>
    </location>
</feature>
<feature type="strand" evidence="7">
    <location>
        <begin position="276"/>
        <end position="283"/>
    </location>
</feature>
<feature type="helix" evidence="7">
    <location>
        <begin position="286"/>
        <end position="298"/>
    </location>
</feature>
<feature type="helix" evidence="7">
    <location>
        <begin position="304"/>
        <end position="317"/>
    </location>
</feature>
<feature type="helix" evidence="7">
    <location>
        <begin position="323"/>
        <end position="325"/>
    </location>
</feature>
<feature type="helix" evidence="7">
    <location>
        <begin position="330"/>
        <end position="343"/>
    </location>
</feature>
<feature type="strand" evidence="7">
    <location>
        <begin position="344"/>
        <end position="346"/>
    </location>
</feature>
<feature type="helix" evidence="7">
    <location>
        <begin position="352"/>
        <end position="355"/>
    </location>
</feature>
<feature type="helix" evidence="7">
    <location>
        <begin position="357"/>
        <end position="360"/>
    </location>
</feature>
<feature type="helix" evidence="7">
    <location>
        <begin position="366"/>
        <end position="371"/>
    </location>
</feature>
<feature type="helix" evidence="7">
    <location>
        <begin position="372"/>
        <end position="375"/>
    </location>
</feature>
<feature type="helix" evidence="7">
    <location>
        <begin position="387"/>
        <end position="400"/>
    </location>
</feature>
<feature type="turn" evidence="7">
    <location>
        <begin position="404"/>
        <end position="406"/>
    </location>
</feature>
<feature type="strand" evidence="7">
    <location>
        <begin position="407"/>
        <end position="410"/>
    </location>
</feature>
<feature type="turn" evidence="7">
    <location>
        <begin position="411"/>
        <end position="414"/>
    </location>
</feature>
<feature type="strand" evidence="7">
    <location>
        <begin position="415"/>
        <end position="418"/>
    </location>
</feature>
<feature type="helix" evidence="7">
    <location>
        <begin position="423"/>
        <end position="425"/>
    </location>
</feature>
<feature type="strand" evidence="7">
    <location>
        <begin position="435"/>
        <end position="437"/>
    </location>
</feature>
<feature type="turn" evidence="7">
    <location>
        <begin position="441"/>
        <end position="444"/>
    </location>
</feature>
<feature type="helix" evidence="7">
    <location>
        <begin position="448"/>
        <end position="467"/>
    </location>
</feature>
<feature type="helix" evidence="7">
    <location>
        <begin position="471"/>
        <end position="473"/>
    </location>
</feature>
<feature type="turn" evidence="7">
    <location>
        <begin position="477"/>
        <end position="480"/>
    </location>
</feature>
<gene>
    <name evidence="6" type="primary">Tent2</name>
    <name evidence="6" type="synonym">Gld2</name>
    <name evidence="6" type="synonym">Palp4</name>
</gene>
<keyword id="KW-0002">3D-structure</keyword>
<keyword id="KW-0067">ATP-binding</keyword>
<keyword id="KW-0963">Cytoplasm</keyword>
<keyword id="KW-0460">Magnesium</keyword>
<keyword id="KW-0464">Manganese</keyword>
<keyword id="KW-0479">Metal-binding</keyword>
<keyword id="KW-0507">mRNA processing</keyword>
<keyword id="KW-0547">Nucleotide-binding</keyword>
<keyword id="KW-0539">Nucleus</keyword>
<keyword id="KW-0597">Phosphoprotein</keyword>
<keyword id="KW-1185">Reference proteome</keyword>
<keyword id="KW-0808">Transferase</keyword>
<dbReference type="EC" id="2.7.7.19"/>
<dbReference type="EMBL" id="BC085771">
    <property type="protein sequence ID" value="AAH85771.1"/>
    <property type="molecule type" value="mRNA"/>
</dbReference>
<dbReference type="RefSeq" id="NP_001008373.1">
    <property type="nucleotide sequence ID" value="NM_001008372.2"/>
</dbReference>
<dbReference type="RefSeq" id="XP_008758861.1">
    <property type="nucleotide sequence ID" value="XM_008760639.1"/>
</dbReference>
<dbReference type="RefSeq" id="XP_063138096.1">
    <property type="nucleotide sequence ID" value="XM_063282026.1"/>
</dbReference>
<dbReference type="PDB" id="6LBK">
    <property type="method" value="X-ray"/>
    <property type="resolution" value="2.50 A"/>
    <property type="chains" value="A/B=131-484"/>
</dbReference>
<dbReference type="PDBsum" id="6LBK"/>
<dbReference type="SMR" id="Q5U315"/>
<dbReference type="FunCoup" id="Q5U315">
    <property type="interactions" value="2948"/>
</dbReference>
<dbReference type="STRING" id="10116.ENSRNOP00000016135"/>
<dbReference type="PhosphoSitePlus" id="Q5U315"/>
<dbReference type="PaxDb" id="10116-ENSRNOP00000016135"/>
<dbReference type="GeneID" id="361878"/>
<dbReference type="KEGG" id="rno:361878"/>
<dbReference type="UCSC" id="RGD:1306438">
    <property type="organism name" value="rat"/>
</dbReference>
<dbReference type="AGR" id="RGD:1306438"/>
<dbReference type="CTD" id="167153"/>
<dbReference type="RGD" id="1306438">
    <property type="gene designation" value="Tent2"/>
</dbReference>
<dbReference type="VEuPathDB" id="HostDB:ENSRNOG00000012099"/>
<dbReference type="eggNOG" id="KOG2277">
    <property type="taxonomic scope" value="Eukaryota"/>
</dbReference>
<dbReference type="HOGENOM" id="CLU_046147_0_0_1"/>
<dbReference type="InParanoid" id="Q5U315"/>
<dbReference type="OrthoDB" id="2274644at2759"/>
<dbReference type="PhylomeDB" id="Q5U315"/>
<dbReference type="TreeFam" id="TF315661"/>
<dbReference type="PRO" id="PR:Q5U315"/>
<dbReference type="Proteomes" id="UP000002494">
    <property type="component" value="Chromosome 2"/>
</dbReference>
<dbReference type="Bgee" id="ENSRNOG00000012099">
    <property type="expression patterns" value="Expressed in ovary and 19 other cell types or tissues"/>
</dbReference>
<dbReference type="GO" id="GO:0005737">
    <property type="term" value="C:cytoplasm"/>
    <property type="evidence" value="ECO:0007669"/>
    <property type="project" value="UniProtKB-SubCell"/>
</dbReference>
<dbReference type="GO" id="GO:0098978">
    <property type="term" value="C:glutamatergic synapse"/>
    <property type="evidence" value="ECO:0000314"/>
    <property type="project" value="SynGO"/>
</dbReference>
<dbReference type="GO" id="GO:0005634">
    <property type="term" value="C:nucleus"/>
    <property type="evidence" value="ECO:0000266"/>
    <property type="project" value="RGD"/>
</dbReference>
<dbReference type="GO" id="GO:0140240">
    <property type="term" value="C:perforant pathway to dendrate granule cell synapse"/>
    <property type="evidence" value="ECO:0000314"/>
    <property type="project" value="SynGO"/>
</dbReference>
<dbReference type="GO" id="GO:0098794">
    <property type="term" value="C:postsynapse"/>
    <property type="evidence" value="ECO:0000314"/>
    <property type="project" value="SynGO"/>
</dbReference>
<dbReference type="GO" id="GO:0005524">
    <property type="term" value="F:ATP binding"/>
    <property type="evidence" value="ECO:0007669"/>
    <property type="project" value="UniProtKB-KW"/>
</dbReference>
<dbReference type="GO" id="GO:0046872">
    <property type="term" value="F:metal ion binding"/>
    <property type="evidence" value="ECO:0007669"/>
    <property type="project" value="UniProtKB-KW"/>
</dbReference>
<dbReference type="GO" id="GO:1990817">
    <property type="term" value="F:poly(A) RNA polymerase activity"/>
    <property type="evidence" value="ECO:0000250"/>
    <property type="project" value="UniProtKB"/>
</dbReference>
<dbReference type="GO" id="GO:1990603">
    <property type="term" value="P:dark adaptation"/>
    <property type="evidence" value="ECO:0000270"/>
    <property type="project" value="RGD"/>
</dbReference>
<dbReference type="GO" id="GO:0002244">
    <property type="term" value="P:hematopoietic progenitor cell differentiation"/>
    <property type="evidence" value="ECO:0000266"/>
    <property type="project" value="RGD"/>
</dbReference>
<dbReference type="GO" id="GO:0021766">
    <property type="term" value="P:hippocampus development"/>
    <property type="evidence" value="ECO:0000270"/>
    <property type="project" value="RGD"/>
</dbReference>
<dbReference type="GO" id="GO:0071044">
    <property type="term" value="P:histone mRNA catabolic process"/>
    <property type="evidence" value="ECO:0000250"/>
    <property type="project" value="UniProtKB"/>
</dbReference>
<dbReference type="GO" id="GO:0031124">
    <property type="term" value="P:mRNA 3'-end processing"/>
    <property type="evidence" value="ECO:0000250"/>
    <property type="project" value="UniProtKB"/>
</dbReference>
<dbReference type="GO" id="GO:2000626">
    <property type="term" value="P:negative regulation of miRNA catabolic process"/>
    <property type="evidence" value="ECO:0000250"/>
    <property type="project" value="UniProtKB"/>
</dbReference>
<dbReference type="GO" id="GO:0030182">
    <property type="term" value="P:neuron differentiation"/>
    <property type="evidence" value="ECO:0000270"/>
    <property type="project" value="RGD"/>
</dbReference>
<dbReference type="GO" id="GO:0090314">
    <property type="term" value="P:positive regulation of protein targeting to membrane"/>
    <property type="evidence" value="ECO:0000315"/>
    <property type="project" value="RGD"/>
</dbReference>
<dbReference type="GO" id="GO:0099170">
    <property type="term" value="P:postsynaptic modulation of chemical synaptic transmission"/>
    <property type="evidence" value="ECO:0000314"/>
    <property type="project" value="SynGO"/>
</dbReference>
<dbReference type="GO" id="GO:0140245">
    <property type="term" value="P:regulation of translation at postsynapse"/>
    <property type="evidence" value="ECO:0000314"/>
    <property type="project" value="SynGO"/>
</dbReference>
<dbReference type="GO" id="GO:0060041">
    <property type="term" value="P:retina development in camera-type eye"/>
    <property type="evidence" value="ECO:0000270"/>
    <property type="project" value="RGD"/>
</dbReference>
<dbReference type="GO" id="GO:0031123">
    <property type="term" value="P:RNA 3'-end processing"/>
    <property type="evidence" value="ECO:0000318"/>
    <property type="project" value="GO_Central"/>
</dbReference>
<dbReference type="GO" id="GO:0140235">
    <property type="term" value="P:RNA polyadenylation at postsynapse"/>
    <property type="evidence" value="ECO:0000314"/>
    <property type="project" value="SynGO"/>
</dbReference>
<dbReference type="GO" id="GO:0140958">
    <property type="term" value="P:target-directed miRNA degradation"/>
    <property type="evidence" value="ECO:0000266"/>
    <property type="project" value="RGD"/>
</dbReference>
<dbReference type="CDD" id="cd05402">
    <property type="entry name" value="NT_PAP_TUTase"/>
    <property type="match status" value="1"/>
</dbReference>
<dbReference type="FunFam" id="1.10.1410.10:FF:000007">
    <property type="entry name" value="poly(A) RNA polymerase GLD2 isoform X1"/>
    <property type="match status" value="1"/>
</dbReference>
<dbReference type="FunFam" id="3.30.460.10:FF:000022">
    <property type="entry name" value="poly(A) RNA polymerase GLD2 isoform X1"/>
    <property type="match status" value="1"/>
</dbReference>
<dbReference type="Gene3D" id="1.10.1410.10">
    <property type="match status" value="1"/>
</dbReference>
<dbReference type="Gene3D" id="3.30.460.10">
    <property type="entry name" value="Beta Polymerase, domain 2"/>
    <property type="match status" value="1"/>
</dbReference>
<dbReference type="InterPro" id="IPR054708">
    <property type="entry name" value="MTPAP-like_central"/>
</dbReference>
<dbReference type="InterPro" id="IPR043519">
    <property type="entry name" value="NT_sf"/>
</dbReference>
<dbReference type="InterPro" id="IPR002058">
    <property type="entry name" value="PAP_assoc"/>
</dbReference>
<dbReference type="PANTHER" id="PTHR12271">
    <property type="entry name" value="POLY A POLYMERASE CID PAP -RELATED"/>
    <property type="match status" value="1"/>
</dbReference>
<dbReference type="PANTHER" id="PTHR12271:SF40">
    <property type="entry name" value="POLY(A) RNA POLYMERASE GLD2"/>
    <property type="match status" value="1"/>
</dbReference>
<dbReference type="Pfam" id="PF22600">
    <property type="entry name" value="MTPAP-like_central"/>
    <property type="match status" value="1"/>
</dbReference>
<dbReference type="Pfam" id="PF03828">
    <property type="entry name" value="PAP_assoc"/>
    <property type="match status" value="1"/>
</dbReference>
<dbReference type="SUPFAM" id="SSF81301">
    <property type="entry name" value="Nucleotidyltransferase"/>
    <property type="match status" value="1"/>
</dbReference>
<dbReference type="SUPFAM" id="SSF81631">
    <property type="entry name" value="PAP/OAS1 substrate-binding domain"/>
    <property type="match status" value="1"/>
</dbReference>
<evidence type="ECO:0000250" key="1">
    <source>
        <dbReference type="UniProtKB" id="O13833"/>
    </source>
</evidence>
<evidence type="ECO:0000250" key="2">
    <source>
        <dbReference type="UniProtKB" id="Q6PIY7"/>
    </source>
</evidence>
<evidence type="ECO:0000250" key="3">
    <source>
        <dbReference type="UniProtKB" id="Q91YI6"/>
    </source>
</evidence>
<evidence type="ECO:0000255" key="4"/>
<evidence type="ECO:0000305" key="5"/>
<evidence type="ECO:0000312" key="6">
    <source>
        <dbReference type="RGD" id="1306438"/>
    </source>
</evidence>
<evidence type="ECO:0007829" key="7">
    <source>
        <dbReference type="PDB" id="6LBK"/>
    </source>
</evidence>
<proteinExistence type="evidence at protein level"/>
<comment type="function">
    <text evidence="2">Cytoplasmic poly(A) RNA polymerase that adds successive AMP monomers to the 3'-end of specific RNAs, forming a poly(A) tail. In contrast to the canonical nuclear poly(A) RNA polymerase, it only adds poly(A) to selected cytoplasmic mRNAs. Does not play a role in replication-dependent histone mRNA degradation. Adds a single nucleotide to the 3' end of specific miRNAs, monoadenylation stabilizes and prolongs the activity of some but not all miRNAs.</text>
</comment>
<comment type="catalytic activity">
    <reaction evidence="2">
        <text>RNA(n) + ATP = RNA(n)-3'-adenine ribonucleotide + diphosphate</text>
        <dbReference type="Rhea" id="RHEA:11332"/>
        <dbReference type="Rhea" id="RHEA-COMP:14527"/>
        <dbReference type="Rhea" id="RHEA-COMP:17347"/>
        <dbReference type="ChEBI" id="CHEBI:30616"/>
        <dbReference type="ChEBI" id="CHEBI:33019"/>
        <dbReference type="ChEBI" id="CHEBI:140395"/>
        <dbReference type="ChEBI" id="CHEBI:173115"/>
        <dbReference type="EC" id="2.7.7.19"/>
    </reaction>
</comment>
<comment type="cofactor">
    <cofactor evidence="1">
        <name>Mg(2+)</name>
        <dbReference type="ChEBI" id="CHEBI:18420"/>
    </cofactor>
    <cofactor evidence="1">
        <name>Mn(2+)</name>
        <dbReference type="ChEBI" id="CHEBI:29035"/>
    </cofactor>
</comment>
<comment type="subunit">
    <text evidence="2 3">Interacts with CPEB1, CPEB2, CPSF1 and PABPC1 (By similarity). Interacts with QKI isoform QKI7; promoting recruitment to miRNA miR-122 and miR-122 stabilization (By similarity).</text>
</comment>
<comment type="subcellular location">
    <subcellularLocation>
        <location evidence="3">Cytoplasm</location>
    </subcellularLocation>
    <subcellularLocation>
        <location evidence="3">Nucleus</location>
    </subcellularLocation>
</comment>
<comment type="similarity">
    <text evidence="5">Belongs to the DNA polymerase type-B-like family. GLD2 subfamily.</text>
</comment>